<feature type="chain" id="PRO_0000124113" description="Proteasome subunit alpha type-4">
    <location>
        <begin position="1"/>
        <end position="249"/>
    </location>
</feature>
<accession>O82530</accession>
<protein>
    <recommendedName>
        <fullName>Proteasome subunit alpha type-4</fullName>
    </recommendedName>
    <alternativeName>
        <fullName>20S proteasome alpha subunit C</fullName>
    </alternativeName>
    <alternativeName>
        <fullName>20S proteasome subunit alpha-3</fullName>
    </alternativeName>
</protein>
<evidence type="ECO:0000250" key="1"/>
<evidence type="ECO:0000255" key="2">
    <source>
        <dbReference type="PROSITE-ProRule" id="PRU00808"/>
    </source>
</evidence>
<name>PSA4_PETHY</name>
<dbReference type="EMBL" id="AF088914">
    <property type="protein sequence ID" value="AAC35982.1"/>
    <property type="molecule type" value="mRNA"/>
</dbReference>
<dbReference type="SMR" id="O82530"/>
<dbReference type="MEROPS" id="T01.973"/>
<dbReference type="GO" id="GO:0005737">
    <property type="term" value="C:cytoplasm"/>
    <property type="evidence" value="ECO:0007669"/>
    <property type="project" value="UniProtKB-SubCell"/>
</dbReference>
<dbReference type="GO" id="GO:0005634">
    <property type="term" value="C:nucleus"/>
    <property type="evidence" value="ECO:0007669"/>
    <property type="project" value="UniProtKB-SubCell"/>
</dbReference>
<dbReference type="GO" id="GO:0019773">
    <property type="term" value="C:proteasome core complex, alpha-subunit complex"/>
    <property type="evidence" value="ECO:0000250"/>
    <property type="project" value="UniProtKB"/>
</dbReference>
<dbReference type="GO" id="GO:0006511">
    <property type="term" value="P:ubiquitin-dependent protein catabolic process"/>
    <property type="evidence" value="ECO:0007669"/>
    <property type="project" value="InterPro"/>
</dbReference>
<dbReference type="CDD" id="cd03752">
    <property type="entry name" value="proteasome_alpha_type_4"/>
    <property type="match status" value="1"/>
</dbReference>
<dbReference type="FunFam" id="3.60.20.10:FF:000031">
    <property type="entry name" value="Proteasome subunit alpha type"/>
    <property type="match status" value="1"/>
</dbReference>
<dbReference type="Gene3D" id="3.60.20.10">
    <property type="entry name" value="Glutamine Phosphoribosylpyrophosphate, subunit 1, domain 1"/>
    <property type="match status" value="1"/>
</dbReference>
<dbReference type="InterPro" id="IPR029055">
    <property type="entry name" value="Ntn_hydrolases_N"/>
</dbReference>
<dbReference type="InterPro" id="IPR050115">
    <property type="entry name" value="Proteasome_alpha"/>
</dbReference>
<dbReference type="InterPro" id="IPR023332">
    <property type="entry name" value="Proteasome_alpha-type"/>
</dbReference>
<dbReference type="InterPro" id="IPR000426">
    <property type="entry name" value="Proteasome_asu_N"/>
</dbReference>
<dbReference type="InterPro" id="IPR001353">
    <property type="entry name" value="Proteasome_sua/b"/>
</dbReference>
<dbReference type="NCBIfam" id="NF003075">
    <property type="entry name" value="PRK03996.1"/>
    <property type="match status" value="1"/>
</dbReference>
<dbReference type="PANTHER" id="PTHR11599">
    <property type="entry name" value="PROTEASOME SUBUNIT ALPHA/BETA"/>
    <property type="match status" value="1"/>
</dbReference>
<dbReference type="Pfam" id="PF00227">
    <property type="entry name" value="Proteasome"/>
    <property type="match status" value="1"/>
</dbReference>
<dbReference type="Pfam" id="PF10584">
    <property type="entry name" value="Proteasome_A_N"/>
    <property type="match status" value="1"/>
</dbReference>
<dbReference type="SMART" id="SM00948">
    <property type="entry name" value="Proteasome_A_N"/>
    <property type="match status" value="1"/>
</dbReference>
<dbReference type="SUPFAM" id="SSF56235">
    <property type="entry name" value="N-terminal nucleophile aminohydrolases (Ntn hydrolases)"/>
    <property type="match status" value="1"/>
</dbReference>
<dbReference type="PROSITE" id="PS00388">
    <property type="entry name" value="PROTEASOME_ALPHA_1"/>
    <property type="match status" value="1"/>
</dbReference>
<dbReference type="PROSITE" id="PS51475">
    <property type="entry name" value="PROTEASOME_ALPHA_2"/>
    <property type="match status" value="1"/>
</dbReference>
<gene>
    <name type="primary">PAC1</name>
    <name type="synonym">PRS1</name>
</gene>
<sequence length="249" mass="27232">MSRRYDSRTTIFSPEGRLYQVEYAMEAIGNAGSAIGISSKDGVVLVGEKKVTSKLLQTSTSSEKMYKIDDHVACAVAGIMSDANILINTARVQAQRYTFSYQEPMPVEQLVQSLCDTKQGYTQYGGLPPFGVSFLFAGWDKNFGFQLFMSDPSGNYAGWKAAAIGANNQAAQSMLKQDYKDDITREEAVQLALKVLSKTMDSTSLTSEKLELAEVFLSNGKVKYQACSPEKLNSMLVKSGLTQPSAEES</sequence>
<keyword id="KW-0963">Cytoplasm</keyword>
<keyword id="KW-0539">Nucleus</keyword>
<keyword id="KW-0647">Proteasome</keyword>
<comment type="function">
    <text>The proteasome is a multicatalytic proteinase complex which is characterized by its ability to cleave peptides with Arg, Phe, Tyr, Leu, and Glu adjacent to the leaving group at neutral or slightly basic pH. The proteasome has an ATP-dependent proteolytic activity.</text>
</comment>
<comment type="subunit">
    <text evidence="1">The 26S proteasome consists of a 20S proteasome core and two 19S regulatory subunits. The 20S proteasome core is composed of 28 subunits that are arranged in four stacked rings, resulting in a barrel-shaped structure. The two end rings are each formed by seven alpha subunits, and the two central rings are each formed by seven beta subunits. The catalytic chamber with the active sites is on the inside of the barrel (By similarity).</text>
</comment>
<comment type="subcellular location">
    <subcellularLocation>
        <location evidence="1">Cytoplasm</location>
    </subcellularLocation>
    <subcellularLocation>
        <location evidence="1">Nucleus</location>
    </subcellularLocation>
</comment>
<comment type="similarity">
    <text evidence="2">Belongs to the peptidase T1A family.</text>
</comment>
<reference key="1">
    <citation type="submission" date="1998-09" db="EMBL/GenBank/DDBJ databases">
        <authorList>
            <person name="Lee H.S."/>
            <person name="Moon J.H."/>
            <person name="Kim S.G."/>
        </authorList>
    </citation>
    <scope>NUCLEOTIDE SEQUENCE [MRNA]</scope>
    <source>
        <tissue>Petal</tissue>
    </source>
</reference>
<organism>
    <name type="scientific">Petunia hybrida</name>
    <name type="common">Petunia</name>
    <dbReference type="NCBI Taxonomy" id="4102"/>
    <lineage>
        <taxon>Eukaryota</taxon>
        <taxon>Viridiplantae</taxon>
        <taxon>Streptophyta</taxon>
        <taxon>Embryophyta</taxon>
        <taxon>Tracheophyta</taxon>
        <taxon>Spermatophyta</taxon>
        <taxon>Magnoliopsida</taxon>
        <taxon>eudicotyledons</taxon>
        <taxon>Gunneridae</taxon>
        <taxon>Pentapetalae</taxon>
        <taxon>asterids</taxon>
        <taxon>lamiids</taxon>
        <taxon>Solanales</taxon>
        <taxon>Solanaceae</taxon>
        <taxon>Petunioideae</taxon>
        <taxon>Petunia</taxon>
    </lineage>
</organism>
<proteinExistence type="evidence at transcript level"/>